<dbReference type="EC" id="2.3.2.27" evidence="2"/>
<dbReference type="EMBL" id="AY225126">
    <property type="protein sequence ID" value="AAP57520.1"/>
    <property type="molecule type" value="mRNA"/>
</dbReference>
<dbReference type="EMBL" id="AK092085">
    <property type="protein sequence ID" value="BAC03801.1"/>
    <property type="molecule type" value="mRNA"/>
</dbReference>
<dbReference type="EMBL" id="AK094385">
    <property type="protein sequence ID" value="BAC04344.1"/>
    <property type="molecule type" value="mRNA"/>
</dbReference>
<dbReference type="EMBL" id="AK128752">
    <property type="protein sequence ID" value="BAG54727.1"/>
    <property type="molecule type" value="mRNA"/>
</dbReference>
<dbReference type="EMBL" id="CH471054">
    <property type="protein sequence ID" value="EAW97033.1"/>
    <property type="molecule type" value="Genomic_DNA"/>
</dbReference>
<dbReference type="EMBL" id="BC114441">
    <property type="protein sequence ID" value="AAI14442.1"/>
    <property type="molecule type" value="mRNA"/>
</dbReference>
<dbReference type="EMBL" id="BC114498">
    <property type="protein sequence ID" value="AAI14499.1"/>
    <property type="molecule type" value="mRNA"/>
</dbReference>
<dbReference type="EMBL" id="AL831941">
    <property type="protein sequence ID" value="CAD38593.2"/>
    <property type="status" value="ALT_SEQ"/>
    <property type="molecule type" value="mRNA"/>
</dbReference>
<dbReference type="CCDS" id="CCDS41800.1">
    <molecule id="Q8N9I9-1"/>
</dbReference>
<dbReference type="CCDS" id="CCDS66410.1">
    <molecule id="Q8N9I9-2"/>
</dbReference>
<dbReference type="RefSeq" id="NP_001273174.1">
    <molecule id="Q8N9I9-2"/>
    <property type="nucleotide sequence ID" value="NM_001286245.2"/>
</dbReference>
<dbReference type="RefSeq" id="NP_001273175.1">
    <molecule id="Q8N9I9-1"/>
    <property type="nucleotide sequence ID" value="NM_001286246.2"/>
</dbReference>
<dbReference type="RefSeq" id="NP_848597.1">
    <molecule id="Q8N9I9-1"/>
    <property type="nucleotide sequence ID" value="NM_178502.4"/>
</dbReference>
<dbReference type="RefSeq" id="XP_005268754.1">
    <molecule id="Q8N9I9-2"/>
    <property type="nucleotide sequence ID" value="XM_005268697.2"/>
</dbReference>
<dbReference type="RefSeq" id="XP_005268755.1">
    <molecule id="Q8N9I9-2"/>
    <property type="nucleotide sequence ID" value="XM_005268698.2"/>
</dbReference>
<dbReference type="RefSeq" id="XP_005268757.1">
    <molecule id="Q8N9I9-2"/>
    <property type="nucleotide sequence ID" value="XM_005268700.2"/>
</dbReference>
<dbReference type="RefSeq" id="XP_005268760.1">
    <molecule id="Q8N9I9-1"/>
    <property type="nucleotide sequence ID" value="XM_005268703.2"/>
</dbReference>
<dbReference type="RefSeq" id="XP_011536324.1">
    <molecule id="Q8N9I9-1"/>
    <property type="nucleotide sequence ID" value="XM_011538022.3"/>
</dbReference>
<dbReference type="RefSeq" id="XP_024304644.1">
    <molecule id="Q8N9I9-1"/>
    <property type="nucleotide sequence ID" value="XM_024448876.2"/>
</dbReference>
<dbReference type="RefSeq" id="XP_047284435.1">
    <molecule id="Q8N9I9-2"/>
    <property type="nucleotide sequence ID" value="XM_047428479.1"/>
</dbReference>
<dbReference type="RefSeq" id="XP_047284436.1">
    <molecule id="Q8N9I9-2"/>
    <property type="nucleotide sequence ID" value="XM_047428480.1"/>
</dbReference>
<dbReference type="RefSeq" id="XP_047284437.1">
    <molecule id="Q8N9I9-2"/>
    <property type="nucleotide sequence ID" value="XM_047428481.1"/>
</dbReference>
<dbReference type="RefSeq" id="XP_047284438.1">
    <molecule id="Q8N9I9-2"/>
    <property type="nucleotide sequence ID" value="XM_047428482.1"/>
</dbReference>
<dbReference type="RefSeq" id="XP_047284439.1">
    <molecule id="Q8N9I9-1"/>
    <property type="nucleotide sequence ID" value="XM_047428483.1"/>
</dbReference>
<dbReference type="RefSeq" id="XP_047284440.1">
    <molecule id="Q8N9I9-1"/>
    <property type="nucleotide sequence ID" value="XM_047428484.1"/>
</dbReference>
<dbReference type="RefSeq" id="XP_054227353.1">
    <molecule id="Q8N9I9-2"/>
    <property type="nucleotide sequence ID" value="XM_054371378.1"/>
</dbReference>
<dbReference type="RefSeq" id="XP_054227354.1">
    <molecule id="Q8N9I9-2"/>
    <property type="nucleotide sequence ID" value="XM_054371379.1"/>
</dbReference>
<dbReference type="RefSeq" id="XP_054227355.1">
    <molecule id="Q8N9I9-2"/>
    <property type="nucleotide sequence ID" value="XM_054371380.1"/>
</dbReference>
<dbReference type="RefSeq" id="XP_054227356.1">
    <molecule id="Q8N9I9-2"/>
    <property type="nucleotide sequence ID" value="XM_054371381.1"/>
</dbReference>
<dbReference type="RefSeq" id="XP_054227357.1">
    <molecule id="Q8N9I9-2"/>
    <property type="nucleotide sequence ID" value="XM_054371382.1"/>
</dbReference>
<dbReference type="RefSeq" id="XP_054227358.1">
    <molecule id="Q8N9I9-2"/>
    <property type="nucleotide sequence ID" value="XM_054371383.1"/>
</dbReference>
<dbReference type="RefSeq" id="XP_054227359.1">
    <molecule id="Q8N9I9-1"/>
    <property type="nucleotide sequence ID" value="XM_054371384.1"/>
</dbReference>
<dbReference type="RefSeq" id="XP_054227360.1">
    <molecule id="Q8N9I9-1"/>
    <property type="nucleotide sequence ID" value="XM_054371385.1"/>
</dbReference>
<dbReference type="RefSeq" id="XP_054227361.1">
    <molecule id="Q8N9I9-1"/>
    <property type="nucleotide sequence ID" value="XM_054371386.1"/>
</dbReference>
<dbReference type="SMR" id="Q8N9I9"/>
<dbReference type="BioGRID" id="128203">
    <property type="interactions" value="105"/>
</dbReference>
<dbReference type="FunCoup" id="Q8N9I9">
    <property type="interactions" value="140"/>
</dbReference>
<dbReference type="IntAct" id="Q8N9I9">
    <property type="interactions" value="52"/>
</dbReference>
<dbReference type="STRING" id="9606.ENSP00000448696"/>
<dbReference type="iPTMnet" id="Q8N9I9"/>
<dbReference type="PhosphoSitePlus" id="Q8N9I9"/>
<dbReference type="BioMuta" id="DTX3"/>
<dbReference type="DMDM" id="37077338"/>
<dbReference type="jPOST" id="Q8N9I9"/>
<dbReference type="MassIVE" id="Q8N9I9"/>
<dbReference type="PaxDb" id="9606-ENSP00000448696"/>
<dbReference type="PeptideAtlas" id="Q8N9I9"/>
<dbReference type="ProteomicsDB" id="72545">
    <molecule id="Q8N9I9-1"/>
</dbReference>
<dbReference type="ProteomicsDB" id="72546">
    <molecule id="Q8N9I9-2"/>
</dbReference>
<dbReference type="Pumba" id="Q8N9I9"/>
<dbReference type="TopDownProteomics" id="Q8N9I9-1">
    <molecule id="Q8N9I9-1"/>
</dbReference>
<dbReference type="Antibodypedia" id="28813">
    <property type="antibodies" value="154 antibodies from 28 providers"/>
</dbReference>
<dbReference type="DNASU" id="196403"/>
<dbReference type="Ensembl" id="ENST00000337737.8">
    <molecule id="Q8N9I9-1"/>
    <property type="protein sequence ID" value="ENSP00000338050.3"/>
    <property type="gene ID" value="ENSG00000178498.16"/>
</dbReference>
<dbReference type="Ensembl" id="ENST00000548198.5">
    <molecule id="Q8N9I9-1"/>
    <property type="protein sequence ID" value="ENSP00000447873.1"/>
    <property type="gene ID" value="ENSG00000178498.16"/>
</dbReference>
<dbReference type="Ensembl" id="ENST00000548804.5">
    <molecule id="Q8N9I9-1"/>
    <property type="protein sequence ID" value="ENSP00000449294.1"/>
    <property type="gene ID" value="ENSG00000178498.16"/>
</dbReference>
<dbReference type="Ensembl" id="ENST00000551632.1">
    <molecule id="Q8N9I9-2"/>
    <property type="protein sequence ID" value="ENSP00000448696.1"/>
    <property type="gene ID" value="ENSG00000178498.16"/>
</dbReference>
<dbReference type="GeneID" id="196403"/>
<dbReference type="KEGG" id="hsa:196403"/>
<dbReference type="MANE-Select" id="ENST00000337737.8">
    <property type="protein sequence ID" value="ENSP00000338050.3"/>
    <property type="RefSeq nucleotide sequence ID" value="NM_178502.4"/>
    <property type="RefSeq protein sequence ID" value="NP_848597.1"/>
</dbReference>
<dbReference type="UCSC" id="uc001sow.3">
    <molecule id="Q8N9I9-1"/>
    <property type="organism name" value="human"/>
</dbReference>
<dbReference type="AGR" id="HGNC:24457"/>
<dbReference type="CTD" id="196403"/>
<dbReference type="DisGeNET" id="196403"/>
<dbReference type="GeneCards" id="DTX3"/>
<dbReference type="HGNC" id="HGNC:24457">
    <property type="gene designation" value="DTX3"/>
</dbReference>
<dbReference type="HPA" id="ENSG00000178498">
    <property type="expression patterns" value="Low tissue specificity"/>
</dbReference>
<dbReference type="MIM" id="613142">
    <property type="type" value="gene"/>
</dbReference>
<dbReference type="neXtProt" id="NX_Q8N9I9"/>
<dbReference type="OpenTargets" id="ENSG00000178498"/>
<dbReference type="PharmGKB" id="PA134887936"/>
<dbReference type="VEuPathDB" id="HostDB:ENSG00000178498"/>
<dbReference type="eggNOG" id="ENOG502QUYA">
    <property type="taxonomic scope" value="Eukaryota"/>
</dbReference>
<dbReference type="GeneTree" id="ENSGT00940000161404"/>
<dbReference type="HOGENOM" id="CLU_030422_1_0_1"/>
<dbReference type="InParanoid" id="Q8N9I9"/>
<dbReference type="OMA" id="XAEHPNP"/>
<dbReference type="OrthoDB" id="527344at2759"/>
<dbReference type="PAN-GO" id="Q8N9I9">
    <property type="GO annotations" value="4 GO annotations based on evolutionary models"/>
</dbReference>
<dbReference type="PhylomeDB" id="Q8N9I9"/>
<dbReference type="TreeFam" id="TF325526"/>
<dbReference type="PathwayCommons" id="Q8N9I9"/>
<dbReference type="SignaLink" id="Q8N9I9"/>
<dbReference type="SIGNOR" id="Q8N9I9"/>
<dbReference type="UniPathway" id="UPA00143"/>
<dbReference type="BioGRID-ORCS" id="196403">
    <property type="hits" value="7 hits in 1184 CRISPR screens"/>
</dbReference>
<dbReference type="GenomeRNAi" id="196403"/>
<dbReference type="Pharos" id="Q8N9I9">
    <property type="development level" value="Tbio"/>
</dbReference>
<dbReference type="PRO" id="PR:Q8N9I9"/>
<dbReference type="Proteomes" id="UP000005640">
    <property type="component" value="Chromosome 12"/>
</dbReference>
<dbReference type="RNAct" id="Q8N9I9">
    <property type="molecule type" value="protein"/>
</dbReference>
<dbReference type="Bgee" id="ENSG00000178498">
    <property type="expression patterns" value="Expressed in right hemisphere of cerebellum and 167 other cell types or tissues"/>
</dbReference>
<dbReference type="ExpressionAtlas" id="Q8N9I9">
    <property type="expression patterns" value="baseline and differential"/>
</dbReference>
<dbReference type="GO" id="GO:0005737">
    <property type="term" value="C:cytoplasm"/>
    <property type="evidence" value="ECO:0007669"/>
    <property type="project" value="UniProtKB-SubCell"/>
</dbReference>
<dbReference type="GO" id="GO:0005654">
    <property type="term" value="C:nucleoplasm"/>
    <property type="evidence" value="ECO:0000318"/>
    <property type="project" value="GO_Central"/>
</dbReference>
<dbReference type="GO" id="GO:0061630">
    <property type="term" value="F:ubiquitin protein ligase activity"/>
    <property type="evidence" value="ECO:0000318"/>
    <property type="project" value="GO_Central"/>
</dbReference>
<dbReference type="GO" id="GO:0008270">
    <property type="term" value="F:zinc ion binding"/>
    <property type="evidence" value="ECO:0007669"/>
    <property type="project" value="UniProtKB-KW"/>
</dbReference>
<dbReference type="GO" id="GO:0007219">
    <property type="term" value="P:Notch signaling pathway"/>
    <property type="evidence" value="ECO:0000318"/>
    <property type="project" value="GO_Central"/>
</dbReference>
<dbReference type="GO" id="GO:0016567">
    <property type="term" value="P:protein ubiquitination"/>
    <property type="evidence" value="ECO:0000318"/>
    <property type="project" value="GO_Central"/>
</dbReference>
<dbReference type="CDD" id="cd09633">
    <property type="entry name" value="Deltex_C"/>
    <property type="match status" value="1"/>
</dbReference>
<dbReference type="CDD" id="cd16711">
    <property type="entry name" value="RING-HC_DTX3"/>
    <property type="match status" value="1"/>
</dbReference>
<dbReference type="FunFam" id="3.30.390.130:FF:000001">
    <property type="entry name" value="Probable E3 ubiquitin-protein ligase DTX3"/>
    <property type="match status" value="1"/>
</dbReference>
<dbReference type="FunFam" id="3.30.40.10:FF:000254">
    <property type="entry name" value="Probable E3 ubiquitin-protein ligase DTX3"/>
    <property type="match status" value="1"/>
</dbReference>
<dbReference type="Gene3D" id="3.30.390.130">
    <property type="match status" value="1"/>
</dbReference>
<dbReference type="Gene3D" id="3.30.40.10">
    <property type="entry name" value="Zinc/RING finger domain, C3HC4 (zinc finger)"/>
    <property type="match status" value="1"/>
</dbReference>
<dbReference type="InterPro" id="IPR039396">
    <property type="entry name" value="Deltex_C"/>
</dbReference>
<dbReference type="InterPro" id="IPR039399">
    <property type="entry name" value="Deltex_C_sf"/>
</dbReference>
<dbReference type="InterPro" id="IPR039398">
    <property type="entry name" value="Deltex_fam"/>
</dbReference>
<dbReference type="InterPro" id="IPR001841">
    <property type="entry name" value="Znf_RING"/>
</dbReference>
<dbReference type="InterPro" id="IPR013083">
    <property type="entry name" value="Znf_RING/FYVE/PHD"/>
</dbReference>
<dbReference type="InterPro" id="IPR017907">
    <property type="entry name" value="Znf_RING_CS"/>
</dbReference>
<dbReference type="PANTHER" id="PTHR12622">
    <property type="entry name" value="DELTEX-RELATED"/>
    <property type="match status" value="1"/>
</dbReference>
<dbReference type="Pfam" id="PF18102">
    <property type="entry name" value="DTC"/>
    <property type="match status" value="1"/>
</dbReference>
<dbReference type="Pfam" id="PF13923">
    <property type="entry name" value="zf-C3HC4_2"/>
    <property type="match status" value="1"/>
</dbReference>
<dbReference type="SMART" id="SM00184">
    <property type="entry name" value="RING"/>
    <property type="match status" value="1"/>
</dbReference>
<dbReference type="SUPFAM" id="SSF57850">
    <property type="entry name" value="RING/U-box"/>
    <property type="match status" value="1"/>
</dbReference>
<dbReference type="PROSITE" id="PS00518">
    <property type="entry name" value="ZF_RING_1"/>
    <property type="match status" value="1"/>
</dbReference>
<dbReference type="PROSITE" id="PS50089">
    <property type="entry name" value="ZF_RING_2"/>
    <property type="match status" value="1"/>
</dbReference>
<proteinExistence type="evidence at protein level"/>
<reference key="1">
    <citation type="journal article" date="2003" name="J. Biol. Chem.">
        <title>The BAL-binding protein BBAP and related Deltex family members exhibit ubiquitin-protein isopeptide ligase activity.</title>
        <authorList>
            <person name="Takeyama K."/>
            <person name="Aguiar R.C.T."/>
            <person name="Gu L."/>
            <person name="He C."/>
            <person name="Freeman G.J."/>
            <person name="Kutok J.L."/>
            <person name="Aster J.C."/>
            <person name="Shipp M.A."/>
        </authorList>
    </citation>
    <scope>NUCLEOTIDE SEQUENCE [MRNA] (ISOFORM 1)</scope>
    <scope>IN VITRO UBIQUITIN LIGASE ACTIVITY</scope>
    <scope>SUBUNIT</scope>
</reference>
<reference key="2">
    <citation type="journal article" date="2004" name="Nat. Genet.">
        <title>Complete sequencing and characterization of 21,243 full-length human cDNAs.</title>
        <authorList>
            <person name="Ota T."/>
            <person name="Suzuki Y."/>
            <person name="Nishikawa T."/>
            <person name="Otsuki T."/>
            <person name="Sugiyama T."/>
            <person name="Irie R."/>
            <person name="Wakamatsu A."/>
            <person name="Hayashi K."/>
            <person name="Sato H."/>
            <person name="Nagai K."/>
            <person name="Kimura K."/>
            <person name="Makita H."/>
            <person name="Sekine M."/>
            <person name="Obayashi M."/>
            <person name="Nishi T."/>
            <person name="Shibahara T."/>
            <person name="Tanaka T."/>
            <person name="Ishii S."/>
            <person name="Yamamoto J."/>
            <person name="Saito K."/>
            <person name="Kawai Y."/>
            <person name="Isono Y."/>
            <person name="Nakamura Y."/>
            <person name="Nagahari K."/>
            <person name="Murakami K."/>
            <person name="Yasuda T."/>
            <person name="Iwayanagi T."/>
            <person name="Wagatsuma M."/>
            <person name="Shiratori A."/>
            <person name="Sudo H."/>
            <person name="Hosoiri T."/>
            <person name="Kaku Y."/>
            <person name="Kodaira H."/>
            <person name="Kondo H."/>
            <person name="Sugawara M."/>
            <person name="Takahashi M."/>
            <person name="Kanda K."/>
            <person name="Yokoi T."/>
            <person name="Furuya T."/>
            <person name="Kikkawa E."/>
            <person name="Omura Y."/>
            <person name="Abe K."/>
            <person name="Kamihara K."/>
            <person name="Katsuta N."/>
            <person name="Sato K."/>
            <person name="Tanikawa M."/>
            <person name="Yamazaki M."/>
            <person name="Ninomiya K."/>
            <person name="Ishibashi T."/>
            <person name="Yamashita H."/>
            <person name="Murakawa K."/>
            <person name="Fujimori K."/>
            <person name="Tanai H."/>
            <person name="Kimata M."/>
            <person name="Watanabe M."/>
            <person name="Hiraoka S."/>
            <person name="Chiba Y."/>
            <person name="Ishida S."/>
            <person name="Ono Y."/>
            <person name="Takiguchi S."/>
            <person name="Watanabe S."/>
            <person name="Yosida M."/>
            <person name="Hotuta T."/>
            <person name="Kusano J."/>
            <person name="Kanehori K."/>
            <person name="Takahashi-Fujii A."/>
            <person name="Hara H."/>
            <person name="Tanase T.-O."/>
            <person name="Nomura Y."/>
            <person name="Togiya S."/>
            <person name="Komai F."/>
            <person name="Hara R."/>
            <person name="Takeuchi K."/>
            <person name="Arita M."/>
            <person name="Imose N."/>
            <person name="Musashino K."/>
            <person name="Yuuki H."/>
            <person name="Oshima A."/>
            <person name="Sasaki N."/>
            <person name="Aotsuka S."/>
            <person name="Yoshikawa Y."/>
            <person name="Matsunawa H."/>
            <person name="Ichihara T."/>
            <person name="Shiohata N."/>
            <person name="Sano S."/>
            <person name="Moriya S."/>
            <person name="Momiyama H."/>
            <person name="Satoh N."/>
            <person name="Takami S."/>
            <person name="Terashima Y."/>
            <person name="Suzuki O."/>
            <person name="Nakagawa S."/>
            <person name="Senoh A."/>
            <person name="Mizoguchi H."/>
            <person name="Goto Y."/>
            <person name="Shimizu F."/>
            <person name="Wakebe H."/>
            <person name="Hishigaki H."/>
            <person name="Watanabe T."/>
            <person name="Sugiyama A."/>
            <person name="Takemoto M."/>
            <person name="Kawakami B."/>
            <person name="Yamazaki M."/>
            <person name="Watanabe K."/>
            <person name="Kumagai A."/>
            <person name="Itakura S."/>
            <person name="Fukuzumi Y."/>
            <person name="Fujimori Y."/>
            <person name="Komiyama M."/>
            <person name="Tashiro H."/>
            <person name="Tanigami A."/>
            <person name="Fujiwara T."/>
            <person name="Ono T."/>
            <person name="Yamada K."/>
            <person name="Fujii Y."/>
            <person name="Ozaki K."/>
            <person name="Hirao M."/>
            <person name="Ohmori Y."/>
            <person name="Kawabata A."/>
            <person name="Hikiji T."/>
            <person name="Kobatake N."/>
            <person name="Inagaki H."/>
            <person name="Ikema Y."/>
            <person name="Okamoto S."/>
            <person name="Okitani R."/>
            <person name="Kawakami T."/>
            <person name="Noguchi S."/>
            <person name="Itoh T."/>
            <person name="Shigeta K."/>
            <person name="Senba T."/>
            <person name="Matsumura K."/>
            <person name="Nakajima Y."/>
            <person name="Mizuno T."/>
            <person name="Morinaga M."/>
            <person name="Sasaki M."/>
            <person name="Togashi T."/>
            <person name="Oyama M."/>
            <person name="Hata H."/>
            <person name="Watanabe M."/>
            <person name="Komatsu T."/>
            <person name="Mizushima-Sugano J."/>
            <person name="Satoh T."/>
            <person name="Shirai Y."/>
            <person name="Takahashi Y."/>
            <person name="Nakagawa K."/>
            <person name="Okumura K."/>
            <person name="Nagase T."/>
            <person name="Nomura N."/>
            <person name="Kikuchi H."/>
            <person name="Masuho Y."/>
            <person name="Yamashita R."/>
            <person name="Nakai K."/>
            <person name="Yada T."/>
            <person name="Nakamura Y."/>
            <person name="Ohara O."/>
            <person name="Isogai T."/>
            <person name="Sugano S."/>
        </authorList>
    </citation>
    <scope>NUCLEOTIDE SEQUENCE [LARGE SCALE MRNA] (ISOFORMS 1 AND 2)</scope>
    <source>
        <tissue>Cerebellum</tissue>
        <tissue>Teratocarcinoma</tissue>
    </source>
</reference>
<reference key="3">
    <citation type="submission" date="2005-07" db="EMBL/GenBank/DDBJ databases">
        <authorList>
            <person name="Mural R.J."/>
            <person name="Istrail S."/>
            <person name="Sutton G."/>
            <person name="Florea L."/>
            <person name="Halpern A.L."/>
            <person name="Mobarry C.M."/>
            <person name="Lippert R."/>
            <person name="Walenz B."/>
            <person name="Shatkay H."/>
            <person name="Dew I."/>
            <person name="Miller J.R."/>
            <person name="Flanigan M.J."/>
            <person name="Edwards N.J."/>
            <person name="Bolanos R."/>
            <person name="Fasulo D."/>
            <person name="Halldorsson B.V."/>
            <person name="Hannenhalli S."/>
            <person name="Turner R."/>
            <person name="Yooseph S."/>
            <person name="Lu F."/>
            <person name="Nusskern D.R."/>
            <person name="Shue B.C."/>
            <person name="Zheng X.H."/>
            <person name="Zhong F."/>
            <person name="Delcher A.L."/>
            <person name="Huson D.H."/>
            <person name="Kravitz S.A."/>
            <person name="Mouchard L."/>
            <person name="Reinert K."/>
            <person name="Remington K.A."/>
            <person name="Clark A.G."/>
            <person name="Waterman M.S."/>
            <person name="Eichler E.E."/>
            <person name="Adams M.D."/>
            <person name="Hunkapiller M.W."/>
            <person name="Myers E.W."/>
            <person name="Venter J.C."/>
        </authorList>
    </citation>
    <scope>NUCLEOTIDE SEQUENCE [LARGE SCALE GENOMIC DNA]</scope>
</reference>
<reference key="4">
    <citation type="journal article" date="2004" name="Genome Res.">
        <title>The status, quality, and expansion of the NIH full-length cDNA project: the Mammalian Gene Collection (MGC).</title>
        <authorList>
            <consortium name="The MGC Project Team"/>
        </authorList>
    </citation>
    <scope>NUCLEOTIDE SEQUENCE [LARGE SCALE MRNA] (ISOFORM 1)</scope>
</reference>
<reference key="5">
    <citation type="journal article" date="2007" name="BMC Genomics">
        <title>The full-ORF clone resource of the German cDNA consortium.</title>
        <authorList>
            <person name="Bechtel S."/>
            <person name="Rosenfelder H."/>
            <person name="Duda A."/>
            <person name="Schmidt C.P."/>
            <person name="Ernst U."/>
            <person name="Wellenreuther R."/>
            <person name="Mehrle A."/>
            <person name="Schuster C."/>
            <person name="Bahr A."/>
            <person name="Bloecker H."/>
            <person name="Heubner D."/>
            <person name="Hoerlein A."/>
            <person name="Michel G."/>
            <person name="Wedler H."/>
            <person name="Koehrer K."/>
            <person name="Ottenwaelder B."/>
            <person name="Poustka A."/>
            <person name="Wiemann S."/>
            <person name="Schupp I."/>
        </authorList>
    </citation>
    <scope>NUCLEOTIDE SEQUENCE [LARGE SCALE MRNA] OF 4-201 (ISOFORM 1)</scope>
    <source>
        <tissue>Brain</tissue>
    </source>
</reference>
<evidence type="ECO:0000250" key="1"/>
<evidence type="ECO:0000250" key="2">
    <source>
        <dbReference type="UniProtKB" id="Q61010"/>
    </source>
</evidence>
<evidence type="ECO:0000255" key="3">
    <source>
        <dbReference type="PROSITE-ProRule" id="PRU00175"/>
    </source>
</evidence>
<evidence type="ECO:0000256" key="4">
    <source>
        <dbReference type="SAM" id="MobiDB-lite"/>
    </source>
</evidence>
<evidence type="ECO:0000303" key="5">
    <source>
    </source>
</evidence>
<evidence type="ECO:0000305" key="6"/>
<keyword id="KW-0025">Alternative splicing</keyword>
<keyword id="KW-0963">Cytoplasm</keyword>
<keyword id="KW-0479">Metal-binding</keyword>
<keyword id="KW-0914">Notch signaling pathway</keyword>
<keyword id="KW-1267">Proteomics identification</keyword>
<keyword id="KW-1185">Reference proteome</keyword>
<keyword id="KW-0808">Transferase</keyword>
<keyword id="KW-0833">Ubl conjugation pathway</keyword>
<keyword id="KW-0862">Zinc</keyword>
<keyword id="KW-0863">Zinc-finger</keyword>
<name>DTX3_HUMAN</name>
<gene>
    <name type="primary">DTX3</name>
    <name type="synonym">RNF154</name>
</gene>
<feature type="chain" id="PRO_0000219085" description="Probable E3 ubiquitin-protein ligase DTX3">
    <location>
        <begin position="1"/>
        <end position="347"/>
    </location>
</feature>
<feature type="zinc finger region" description="RING-type" evidence="3">
    <location>
        <begin position="164"/>
        <end position="205"/>
    </location>
</feature>
<feature type="region of interest" description="Disordered" evidence="4">
    <location>
        <begin position="113"/>
        <end position="157"/>
    </location>
</feature>
<feature type="compositionally biased region" description="Pro residues" evidence="4">
    <location>
        <begin position="121"/>
        <end position="151"/>
    </location>
</feature>
<feature type="splice variant" id="VSP_008354" description="In isoform 2." evidence="5">
    <original>MSFVLSR</original>
    <variation>MPILSSSGSK</variation>
    <location>
        <begin position="1"/>
        <end position="7"/>
    </location>
</feature>
<comment type="function">
    <text evidence="1">Regulator of Notch signaling, a signaling pathway involved in cell-cell communications that regulates a broad spectrum of cell-fate determinations. Probably acts both as a positive and negative regulator of Notch, depending on the developmental and cell context (By similarity). Functions as an ubiquitin ligase protein in vitro, suggesting that it may regulate the Notch pathway via some ubiquitin ligase activity.</text>
</comment>
<comment type="catalytic activity">
    <reaction evidence="2">
        <text>S-ubiquitinyl-[E2 ubiquitin-conjugating enzyme]-L-cysteine + [acceptor protein]-L-lysine = [E2 ubiquitin-conjugating enzyme]-L-cysteine + N(6)-ubiquitinyl-[acceptor protein]-L-lysine.</text>
        <dbReference type="EC" id="2.3.2.27"/>
    </reaction>
</comment>
<comment type="pathway">
    <text>Protein modification; protein ubiquitination.</text>
</comment>
<comment type="subunit">
    <text evidence="1">Homodimer. May form a heterodimers with other members of the Deltex family. Interacts with NOTCH1.</text>
</comment>
<comment type="interaction">
    <interactant intactId="EBI-2340258">
        <id>Q8N9I9</id>
    </interactant>
    <interactant intactId="EBI-4289908">
        <id>P84085</id>
        <label>ARF5</label>
    </interactant>
    <organismsDiffer>false</organismsDiffer>
    <experiments>3</experiments>
</comment>
<comment type="interaction">
    <interactant intactId="EBI-2340258">
        <id>Q8N9I9</id>
    </interactant>
    <interactant intactId="EBI-747185">
        <id>O95817</id>
        <label>BAG3</label>
    </interactant>
    <organismsDiffer>false</organismsDiffer>
    <experiments>3</experiments>
</comment>
<comment type="interaction">
    <interactant intactId="EBI-2340258">
        <id>Q8N9I9</id>
    </interactant>
    <interactant intactId="EBI-6255981">
        <id>Q7L775</id>
        <label>EPM2AIP1</label>
    </interactant>
    <organismsDiffer>false</organismsDiffer>
    <experiments>3</experiments>
</comment>
<comment type="interaction">
    <interactant intactId="EBI-2340258">
        <id>Q8N9I9</id>
    </interactant>
    <interactant intactId="EBI-6658203">
        <id>Q86YD7</id>
        <label>FAM90A1</label>
    </interactant>
    <organismsDiffer>false</organismsDiffer>
    <experiments>5</experiments>
</comment>
<comment type="interaction">
    <interactant intactId="EBI-2340258">
        <id>Q8N9I9</id>
    </interactant>
    <interactant intactId="EBI-10691738">
        <id>P06241-3</id>
        <label>FYN</label>
    </interactant>
    <organismsDiffer>false</organismsDiffer>
    <experiments>4</experiments>
</comment>
<comment type="interaction">
    <interactant intactId="EBI-2340258">
        <id>Q8N9I9</id>
    </interactant>
    <interactant intactId="EBI-401755">
        <id>P62993</id>
        <label>GRB2</label>
    </interactant>
    <organismsDiffer>false</organismsDiffer>
    <experiments>3</experiments>
</comment>
<comment type="interaction">
    <interactant intactId="EBI-2340258">
        <id>Q8N9I9</id>
    </interactant>
    <interactant intactId="EBI-713568">
        <id>P45984</id>
        <label>MAPK9</label>
    </interactant>
    <organismsDiffer>false</organismsDiffer>
    <experiments>3</experiments>
</comment>
<comment type="interaction">
    <interactant intactId="EBI-2340258">
        <id>Q8N9I9</id>
    </interactant>
    <interactant intactId="EBI-713635">
        <id>O43639</id>
        <label>NCK2</label>
    </interactant>
    <organismsDiffer>false</organismsDiffer>
    <experiments>5</experiments>
</comment>
<comment type="interaction">
    <interactant intactId="EBI-2340258">
        <id>Q8N9I9</id>
    </interactant>
    <interactant intactId="EBI-10271199">
        <id>Q8NI38</id>
        <label>NFKBID</label>
    </interactant>
    <organismsDiffer>false</organismsDiffer>
    <experiments>3</experiments>
</comment>
<comment type="interaction">
    <interactant intactId="EBI-2340258">
        <id>Q8N9I9</id>
    </interactant>
    <interactant intactId="EBI-17644640">
        <id>Q9NR21-1</id>
        <label>PARP11</label>
    </interactant>
    <organismsDiffer>false</organismsDiffer>
    <experiments>3</experiments>
</comment>
<comment type="interaction">
    <interactant intactId="EBI-2340258">
        <id>Q8N9I9</id>
    </interactant>
    <interactant intactId="EBI-1383632">
        <id>Q13882</id>
        <label>PTK6</label>
    </interactant>
    <organismsDiffer>false</organismsDiffer>
    <experiments>3</experiments>
</comment>
<comment type="interaction">
    <interactant intactId="EBI-2340258">
        <id>Q8N9I9</id>
    </interactant>
    <interactant intactId="EBI-5235340">
        <id>Q7Z699</id>
        <label>SPRED1</label>
    </interactant>
    <organismsDiffer>false</organismsDiffer>
    <experiments>3</experiments>
</comment>
<comment type="interaction">
    <interactant intactId="EBI-2340258">
        <id>Q8N9I9</id>
    </interactant>
    <interactant intactId="EBI-11955057">
        <id>Q8N8B7-2</id>
        <label>TCEANC</label>
    </interactant>
    <organismsDiffer>false</organismsDiffer>
    <experiments>3</experiments>
</comment>
<comment type="interaction">
    <interactant intactId="EBI-2340258">
        <id>Q8N9I9</id>
    </interactant>
    <interactant intactId="EBI-3650647">
        <id>Q9BUZ4</id>
        <label>TRAF4</label>
    </interactant>
    <organismsDiffer>false</organismsDiffer>
    <experiments>4</experiments>
</comment>
<comment type="interaction">
    <interactant intactId="EBI-2340258">
        <id>Q8N9I9</id>
    </interactant>
    <interactant intactId="EBI-6550597">
        <id>Q15642-2</id>
        <label>TRIP10</label>
    </interactant>
    <organismsDiffer>false</organismsDiffer>
    <experiments>3</experiments>
</comment>
<comment type="interaction">
    <interactant intactId="EBI-2340258">
        <id>Q8N9I9</id>
    </interactant>
    <interactant intactId="EBI-7353612">
        <id>P57075-2</id>
        <label>UBASH3A</label>
    </interactant>
    <organismsDiffer>false</organismsDiffer>
    <experiments>3</experiments>
</comment>
<comment type="interaction">
    <interactant intactId="EBI-2340258">
        <id>Q8N9I9</id>
    </interactant>
    <interactant intactId="EBI-1380492">
        <id>Q8TF42</id>
        <label>UBASH3B</label>
    </interactant>
    <organismsDiffer>false</organismsDiffer>
    <experiments>3</experiments>
</comment>
<comment type="interaction">
    <interactant intactId="EBI-2340258">
        <id>Q8N9I9</id>
    </interactant>
    <interactant intactId="EBI-743540">
        <id>P51668</id>
        <label>UBE2D1</label>
    </interactant>
    <organismsDiffer>false</organismsDiffer>
    <experiments>6</experiments>
</comment>
<comment type="interaction">
    <interactant intactId="EBI-2340258">
        <id>Q8N9I9</id>
    </interactant>
    <interactant intactId="EBI-348268">
        <id>P61077</id>
        <label>UBE2D3</label>
    </interactant>
    <organismsDiffer>false</organismsDiffer>
    <experiments>4</experiments>
</comment>
<comment type="interaction">
    <interactant intactId="EBI-2340258">
        <id>Q8N9I9</id>
    </interactant>
    <interactant intactId="EBI-745527">
        <id>Q9Y2X8</id>
        <label>UBE2D4</label>
    </interactant>
    <organismsDiffer>false</organismsDiffer>
    <experiments>4</experiments>
</comment>
<comment type="interaction">
    <interactant intactId="EBI-2340258">
        <id>Q8N9I9</id>
    </interactant>
    <interactant intactId="EBI-473850">
        <id>P61086</id>
        <label>UBE2K</label>
    </interactant>
    <organismsDiffer>false</organismsDiffer>
    <experiments>10</experiments>
</comment>
<comment type="interaction">
    <interactant intactId="EBI-2340258">
        <id>Q8N9I9</id>
    </interactant>
    <interactant intactId="EBI-2129974">
        <id>O14933</id>
        <label>UBE2L6</label>
    </interactant>
    <organismsDiffer>false</organismsDiffer>
    <experiments>6</experiments>
</comment>
<comment type="interaction">
    <interactant intactId="EBI-2340258">
        <id>Q8N9I9</id>
    </interactant>
    <interactant intactId="EBI-743272">
        <id>O75604</id>
        <label>USP2</label>
    </interactant>
    <organismsDiffer>false</organismsDiffer>
    <experiments>3</experiments>
</comment>
<comment type="interaction">
    <interactant intactId="EBI-2340258">
        <id>Q8N9I9</id>
    </interactant>
    <interactant intactId="EBI-515331">
        <id>P07947</id>
        <label>YES1</label>
    </interactant>
    <organismsDiffer>false</organismsDiffer>
    <experiments>3</experiments>
</comment>
<comment type="interaction">
    <interactant intactId="EBI-2340258">
        <id>Q8N9I9</id>
    </interactant>
    <interactant intactId="EBI-746595">
        <id>Q96E35</id>
        <label>ZMYND19</label>
    </interactant>
    <organismsDiffer>false</organismsDiffer>
    <experiments>3</experiments>
</comment>
<comment type="subcellular location">
    <subcellularLocation>
        <location evidence="6">Cytoplasm</location>
    </subcellularLocation>
</comment>
<comment type="alternative products">
    <event type="alternative splicing"/>
    <isoform>
        <id>Q8N9I9-1</id>
        <name>1</name>
        <sequence type="displayed"/>
    </isoform>
    <isoform>
        <id>Q8N9I9-2</id>
        <name>2</name>
        <sequence type="described" ref="VSP_008354"/>
    </isoform>
</comment>
<comment type="similarity">
    <text evidence="6">Belongs to the Deltex family.</text>
</comment>
<comment type="sequence caution" evidence="6">
    <conflict type="miscellaneous discrepancy">
        <sequence resource="EMBL-CDS" id="CAD38593"/>
    </conflict>
    <text>Intron retention.</text>
</comment>
<accession>Q8N9I9</accession>
<accession>Q53ZZ2</accession>
<accession>Q8NAU6</accession>
<accession>Q8NDS8</accession>
<protein>
    <recommendedName>
        <fullName>Probable E3 ubiquitin-protein ligase DTX3</fullName>
        <ecNumber evidence="2">2.3.2.27</ecNumber>
    </recommendedName>
    <alternativeName>
        <fullName>Protein deltex-3</fullName>
        <shortName>Deltex3</shortName>
    </alternativeName>
    <alternativeName>
        <fullName>RING finger protein 154</fullName>
    </alternativeName>
    <alternativeName>
        <fullName evidence="6">RING-type E3 ubiquitin transferase DTX3</fullName>
    </alternativeName>
</protein>
<sequence>MSFVLSRMAACGGTCKNKVTVSKPVWDFLSKETPARLARLREEHRVSILIDGETSDIYVLQLSPQGPPPAPPNGLYLARKALKGLLKEAEKELKKAQRQGELMGCLALGGGGEHPEMHRAGPPPLRAAPLLPPGARGLPPPPPPLPPPLPPRLREEAEEQESTCPICLGEIQNAKTLEKCRHSFCEGCITRALQVKKACPMCGRFYGQLVGNQPQNGRMLVSKDATLLLPSYEKYGTIVIQYVFPPGVQGAEHPNPGVRYPGTTRVAYLPDCPEGNKVLTLFRKAFDQRLTFTIGTSMTTGRPNVITWNDIHHKTSCTGGPQLFGYPDPTYLTRVQEELRAKGITDD</sequence>
<organism>
    <name type="scientific">Homo sapiens</name>
    <name type="common">Human</name>
    <dbReference type="NCBI Taxonomy" id="9606"/>
    <lineage>
        <taxon>Eukaryota</taxon>
        <taxon>Metazoa</taxon>
        <taxon>Chordata</taxon>
        <taxon>Craniata</taxon>
        <taxon>Vertebrata</taxon>
        <taxon>Euteleostomi</taxon>
        <taxon>Mammalia</taxon>
        <taxon>Eutheria</taxon>
        <taxon>Euarchontoglires</taxon>
        <taxon>Primates</taxon>
        <taxon>Haplorrhini</taxon>
        <taxon>Catarrhini</taxon>
        <taxon>Hominidae</taxon>
        <taxon>Homo</taxon>
    </lineage>
</organism>